<comment type="subcellular location">
    <subcellularLocation>
        <location evidence="1">Nucleus</location>
        <location evidence="1">Nucleolus</location>
    </subcellularLocation>
</comment>
<comment type="similarity">
    <text evidence="3">Belongs to the WD repeat WDR55 family.</text>
</comment>
<sequence>MAKKAKKDGRSVEPTGNPILEVKYNDPLFSIAAHPTEPIFVSGLATGHVFCNRYDAERLEERMQAIKDEQKKKSKTSVKTTNAAWWTQVEDITNTDEIVTCWKTKRHKGSCRSVLFDPIESSVGKHLFTVGKDHVVKKANTETGKVLTKTDISKDLSSKDAVTKLCHSTTHPFLLSGTENGHVLVYDSNDLSNKFKVENVHEDAVNHILAMPSVSPYHYLTVGSTTLSHIDIRKGIVTQSDDQEDELLSMSFVPDDDRNDTVLVSHGGGIVTIWKNSKNKLMDQLSRIKVNKEASIDVMISAMDAGDDDMAASVWCGDSDGLVHRVNYKKGKVVETRLHGTADEVGFLDIDYEYRLLTAGMDSMKLWSAEGDDEEEEESEGEESEESEESDEESDESSGEESEGDDGNGSNSEESDSNDEDEVESSDDEKEKEEESTETDHKNIEAESGKQANKRQASQPKSAGENVKKQKLKQTSKLAHSHGIRRFDGL</sequence>
<gene>
    <name type="primary">JIP5</name>
    <name type="ORF">PGUG_01707</name>
</gene>
<keyword id="KW-0539">Nucleus</keyword>
<keyword id="KW-1185">Reference proteome</keyword>
<keyword id="KW-0677">Repeat</keyword>
<keyword id="KW-0853">WD repeat</keyword>
<protein>
    <recommendedName>
        <fullName>WD repeat-containing protein JIP5</fullName>
    </recommendedName>
</protein>
<dbReference type="EMBL" id="CH408156">
    <property type="protein sequence ID" value="EDK37609.2"/>
    <property type="molecule type" value="Genomic_DNA"/>
</dbReference>
<dbReference type="RefSeq" id="XP_001486036.1">
    <property type="nucleotide sequence ID" value="XM_001485986.1"/>
</dbReference>
<dbReference type="SMR" id="A5DEK6"/>
<dbReference type="FunCoup" id="A5DEK6">
    <property type="interactions" value="118"/>
</dbReference>
<dbReference type="STRING" id="294746.A5DEK6"/>
<dbReference type="GeneID" id="5127538"/>
<dbReference type="KEGG" id="pgu:PGUG_01707"/>
<dbReference type="VEuPathDB" id="FungiDB:PGUG_01707"/>
<dbReference type="eggNOG" id="KOG2444">
    <property type="taxonomic scope" value="Eukaryota"/>
</dbReference>
<dbReference type="HOGENOM" id="CLU_035623_0_0_1"/>
<dbReference type="InParanoid" id="A5DEK6"/>
<dbReference type="OMA" id="QAIHPTE"/>
<dbReference type="OrthoDB" id="2288928at2759"/>
<dbReference type="Proteomes" id="UP000001997">
    <property type="component" value="Unassembled WGS sequence"/>
</dbReference>
<dbReference type="GO" id="GO:0005730">
    <property type="term" value="C:nucleolus"/>
    <property type="evidence" value="ECO:0007669"/>
    <property type="project" value="UniProtKB-SubCell"/>
</dbReference>
<dbReference type="GO" id="GO:0045943">
    <property type="term" value="P:positive regulation of transcription by RNA polymerase I"/>
    <property type="evidence" value="ECO:0007669"/>
    <property type="project" value="TreeGrafter"/>
</dbReference>
<dbReference type="GO" id="GO:0042273">
    <property type="term" value="P:ribosomal large subunit biogenesis"/>
    <property type="evidence" value="ECO:0007669"/>
    <property type="project" value="EnsemblFungi"/>
</dbReference>
<dbReference type="GO" id="GO:0006364">
    <property type="term" value="P:rRNA processing"/>
    <property type="evidence" value="ECO:0007669"/>
    <property type="project" value="TreeGrafter"/>
</dbReference>
<dbReference type="Gene3D" id="2.130.10.10">
    <property type="entry name" value="YVTN repeat-like/Quinoprotein amine dehydrogenase"/>
    <property type="match status" value="2"/>
</dbReference>
<dbReference type="InterPro" id="IPR015943">
    <property type="entry name" value="WD40/YVTN_repeat-like_dom_sf"/>
</dbReference>
<dbReference type="InterPro" id="IPR036322">
    <property type="entry name" value="WD40_repeat_dom_sf"/>
</dbReference>
<dbReference type="InterPro" id="IPR001680">
    <property type="entry name" value="WD40_rpt"/>
</dbReference>
<dbReference type="PANTHER" id="PTHR19924">
    <property type="entry name" value="UTP15 U3 SMALL NUCLEOLAR RNA-ASSOCIATED PROTEIN 15 FAMILY MEMBER"/>
    <property type="match status" value="1"/>
</dbReference>
<dbReference type="PANTHER" id="PTHR19924:SF31">
    <property type="entry name" value="WD REPEAT-CONTAINING PROTEIN JIP5"/>
    <property type="match status" value="1"/>
</dbReference>
<dbReference type="SMART" id="SM00320">
    <property type="entry name" value="WD40"/>
    <property type="match status" value="5"/>
</dbReference>
<dbReference type="SUPFAM" id="SSF50978">
    <property type="entry name" value="WD40 repeat-like"/>
    <property type="match status" value="1"/>
</dbReference>
<reference key="1">
    <citation type="journal article" date="2009" name="Nature">
        <title>Evolution of pathogenicity and sexual reproduction in eight Candida genomes.</title>
        <authorList>
            <person name="Butler G."/>
            <person name="Rasmussen M.D."/>
            <person name="Lin M.F."/>
            <person name="Santos M.A.S."/>
            <person name="Sakthikumar S."/>
            <person name="Munro C.A."/>
            <person name="Rheinbay E."/>
            <person name="Grabherr M."/>
            <person name="Forche A."/>
            <person name="Reedy J.L."/>
            <person name="Agrafioti I."/>
            <person name="Arnaud M.B."/>
            <person name="Bates S."/>
            <person name="Brown A.J.P."/>
            <person name="Brunke S."/>
            <person name="Costanzo M.C."/>
            <person name="Fitzpatrick D.A."/>
            <person name="de Groot P.W.J."/>
            <person name="Harris D."/>
            <person name="Hoyer L.L."/>
            <person name="Hube B."/>
            <person name="Klis F.M."/>
            <person name="Kodira C."/>
            <person name="Lennard N."/>
            <person name="Logue M.E."/>
            <person name="Martin R."/>
            <person name="Neiman A.M."/>
            <person name="Nikolaou E."/>
            <person name="Quail M.A."/>
            <person name="Quinn J."/>
            <person name="Santos M.C."/>
            <person name="Schmitzberger F.F."/>
            <person name="Sherlock G."/>
            <person name="Shah P."/>
            <person name="Silverstein K.A.T."/>
            <person name="Skrzypek M.S."/>
            <person name="Soll D."/>
            <person name="Staggs R."/>
            <person name="Stansfield I."/>
            <person name="Stumpf M.P.H."/>
            <person name="Sudbery P.E."/>
            <person name="Srikantha T."/>
            <person name="Zeng Q."/>
            <person name="Berman J."/>
            <person name="Berriman M."/>
            <person name="Heitman J."/>
            <person name="Gow N.A.R."/>
            <person name="Lorenz M.C."/>
            <person name="Birren B.W."/>
            <person name="Kellis M."/>
            <person name="Cuomo C.A."/>
        </authorList>
    </citation>
    <scope>NUCLEOTIDE SEQUENCE [LARGE SCALE GENOMIC DNA]</scope>
    <source>
        <strain>ATCC 6260 / CBS 566 / DSM 6381 / JCM 1539 / NBRC 10279 / NRRL Y-324</strain>
    </source>
</reference>
<feature type="chain" id="PRO_0000333568" description="WD repeat-containing protein JIP5">
    <location>
        <begin position="1"/>
        <end position="490"/>
    </location>
</feature>
<feature type="repeat" description="WD 1">
    <location>
        <begin position="23"/>
        <end position="64"/>
    </location>
</feature>
<feature type="repeat" description="WD 2">
    <location>
        <begin position="70"/>
        <end position="112"/>
    </location>
</feature>
<feature type="repeat" description="WD 3">
    <location>
        <begin position="118"/>
        <end position="155"/>
    </location>
</feature>
<feature type="repeat" description="WD 4">
    <location>
        <begin position="157"/>
        <end position="196"/>
    </location>
</feature>
<feature type="repeat" description="WD 5">
    <location>
        <begin position="242"/>
        <end position="284"/>
    </location>
</feature>
<feature type="repeat" description="WD 6">
    <location>
        <begin position="286"/>
        <end position="327"/>
    </location>
</feature>
<feature type="repeat" description="WD 7">
    <location>
        <begin position="340"/>
        <end position="377"/>
    </location>
</feature>
<feature type="region of interest" description="Disordered" evidence="2">
    <location>
        <begin position="368"/>
        <end position="490"/>
    </location>
</feature>
<feature type="compositionally biased region" description="Acidic residues" evidence="2">
    <location>
        <begin position="370"/>
        <end position="406"/>
    </location>
</feature>
<feature type="compositionally biased region" description="Acidic residues" evidence="2">
    <location>
        <begin position="413"/>
        <end position="437"/>
    </location>
</feature>
<feature type="compositionally biased region" description="Basic and acidic residues" evidence="2">
    <location>
        <begin position="438"/>
        <end position="448"/>
    </location>
</feature>
<feature type="compositionally biased region" description="Polar residues" evidence="2">
    <location>
        <begin position="450"/>
        <end position="461"/>
    </location>
</feature>
<feature type="compositionally biased region" description="Basic residues" evidence="2">
    <location>
        <begin position="469"/>
        <end position="484"/>
    </location>
</feature>
<organism>
    <name type="scientific">Meyerozyma guilliermondii (strain ATCC 6260 / CBS 566 / DSM 6381 / JCM 1539 / NBRC 10279 / NRRL Y-324)</name>
    <name type="common">Yeast</name>
    <name type="synonym">Candida guilliermondii</name>
    <dbReference type="NCBI Taxonomy" id="294746"/>
    <lineage>
        <taxon>Eukaryota</taxon>
        <taxon>Fungi</taxon>
        <taxon>Dikarya</taxon>
        <taxon>Ascomycota</taxon>
        <taxon>Saccharomycotina</taxon>
        <taxon>Pichiomycetes</taxon>
        <taxon>Debaryomycetaceae</taxon>
        <taxon>Meyerozyma</taxon>
    </lineage>
</organism>
<accession>A5DEK6</accession>
<proteinExistence type="inferred from homology"/>
<name>JIP5_PICGU</name>
<evidence type="ECO:0000250" key="1"/>
<evidence type="ECO:0000256" key="2">
    <source>
        <dbReference type="SAM" id="MobiDB-lite"/>
    </source>
</evidence>
<evidence type="ECO:0000305" key="3"/>